<proteinExistence type="inferred from homology"/>
<dbReference type="EC" id="1.2.1.70" evidence="1"/>
<dbReference type="EMBL" id="CP000685">
    <property type="protein sequence ID" value="ABQ03976.1"/>
    <property type="molecule type" value="Genomic_DNA"/>
</dbReference>
<dbReference type="RefSeq" id="WP_012023029.1">
    <property type="nucleotide sequence ID" value="NC_009441.1"/>
</dbReference>
<dbReference type="SMR" id="A5FLE3"/>
<dbReference type="STRING" id="376686.Fjoh_0942"/>
<dbReference type="KEGG" id="fjo:Fjoh_0942"/>
<dbReference type="eggNOG" id="COG0373">
    <property type="taxonomic scope" value="Bacteria"/>
</dbReference>
<dbReference type="HOGENOM" id="CLU_035113_2_2_10"/>
<dbReference type="OrthoDB" id="110209at2"/>
<dbReference type="UniPathway" id="UPA00251">
    <property type="reaction ID" value="UER00316"/>
</dbReference>
<dbReference type="Proteomes" id="UP000006694">
    <property type="component" value="Chromosome"/>
</dbReference>
<dbReference type="GO" id="GO:0008883">
    <property type="term" value="F:glutamyl-tRNA reductase activity"/>
    <property type="evidence" value="ECO:0007669"/>
    <property type="project" value="UniProtKB-UniRule"/>
</dbReference>
<dbReference type="GO" id="GO:0050661">
    <property type="term" value="F:NADP binding"/>
    <property type="evidence" value="ECO:0007669"/>
    <property type="project" value="InterPro"/>
</dbReference>
<dbReference type="GO" id="GO:0019353">
    <property type="term" value="P:protoporphyrinogen IX biosynthetic process from glutamate"/>
    <property type="evidence" value="ECO:0007669"/>
    <property type="project" value="TreeGrafter"/>
</dbReference>
<dbReference type="FunFam" id="3.30.460.30:FF:000001">
    <property type="entry name" value="Glutamyl-tRNA reductase"/>
    <property type="match status" value="1"/>
</dbReference>
<dbReference type="Gene3D" id="3.30.460.30">
    <property type="entry name" value="Glutamyl-tRNA reductase, N-terminal domain"/>
    <property type="match status" value="1"/>
</dbReference>
<dbReference type="Gene3D" id="3.40.50.720">
    <property type="entry name" value="NAD(P)-binding Rossmann-like Domain"/>
    <property type="match status" value="1"/>
</dbReference>
<dbReference type="HAMAP" id="MF_00087">
    <property type="entry name" value="Glu_tRNA_reductase"/>
    <property type="match status" value="1"/>
</dbReference>
<dbReference type="InterPro" id="IPR000343">
    <property type="entry name" value="4pyrrol_synth_GluRdtase"/>
</dbReference>
<dbReference type="InterPro" id="IPR015896">
    <property type="entry name" value="4pyrrol_synth_GluRdtase_dimer"/>
</dbReference>
<dbReference type="InterPro" id="IPR015895">
    <property type="entry name" value="4pyrrol_synth_GluRdtase_N"/>
</dbReference>
<dbReference type="InterPro" id="IPR018214">
    <property type="entry name" value="GluRdtase_CS"/>
</dbReference>
<dbReference type="InterPro" id="IPR036453">
    <property type="entry name" value="GluRdtase_dimer_dom_sf"/>
</dbReference>
<dbReference type="InterPro" id="IPR036343">
    <property type="entry name" value="GluRdtase_N_sf"/>
</dbReference>
<dbReference type="InterPro" id="IPR036291">
    <property type="entry name" value="NAD(P)-bd_dom_sf"/>
</dbReference>
<dbReference type="InterPro" id="IPR006151">
    <property type="entry name" value="Shikm_DH/Glu-tRNA_Rdtase"/>
</dbReference>
<dbReference type="NCBIfam" id="TIGR01035">
    <property type="entry name" value="hemA"/>
    <property type="match status" value="1"/>
</dbReference>
<dbReference type="PANTHER" id="PTHR43013">
    <property type="entry name" value="GLUTAMYL-TRNA REDUCTASE"/>
    <property type="match status" value="1"/>
</dbReference>
<dbReference type="PANTHER" id="PTHR43013:SF1">
    <property type="entry name" value="GLUTAMYL-TRNA REDUCTASE"/>
    <property type="match status" value="1"/>
</dbReference>
<dbReference type="Pfam" id="PF00745">
    <property type="entry name" value="GlutR_dimer"/>
    <property type="match status" value="1"/>
</dbReference>
<dbReference type="Pfam" id="PF05201">
    <property type="entry name" value="GlutR_N"/>
    <property type="match status" value="1"/>
</dbReference>
<dbReference type="Pfam" id="PF01488">
    <property type="entry name" value="Shikimate_DH"/>
    <property type="match status" value="1"/>
</dbReference>
<dbReference type="PIRSF" id="PIRSF000445">
    <property type="entry name" value="4pyrrol_synth_GluRdtase"/>
    <property type="match status" value="1"/>
</dbReference>
<dbReference type="SUPFAM" id="SSF69742">
    <property type="entry name" value="Glutamyl tRNA-reductase catalytic, N-terminal domain"/>
    <property type="match status" value="1"/>
</dbReference>
<dbReference type="SUPFAM" id="SSF69075">
    <property type="entry name" value="Glutamyl tRNA-reductase dimerization domain"/>
    <property type="match status" value="1"/>
</dbReference>
<dbReference type="SUPFAM" id="SSF51735">
    <property type="entry name" value="NAD(P)-binding Rossmann-fold domains"/>
    <property type="match status" value="1"/>
</dbReference>
<dbReference type="PROSITE" id="PS00747">
    <property type="entry name" value="GLUTR"/>
    <property type="match status" value="1"/>
</dbReference>
<keyword id="KW-0521">NADP</keyword>
<keyword id="KW-0560">Oxidoreductase</keyword>
<keyword id="KW-0627">Porphyrin biosynthesis</keyword>
<name>HEM11_FLAJ1</name>
<reference key="1">
    <citation type="journal article" date="2009" name="Appl. Environ. Microbiol.">
        <title>Novel features of the polysaccharide-digesting gliding bacterium Flavobacterium johnsoniae as revealed by genome sequence analysis.</title>
        <authorList>
            <person name="McBride M.J."/>
            <person name="Xie G."/>
            <person name="Martens E.C."/>
            <person name="Lapidus A."/>
            <person name="Henrissat B."/>
            <person name="Rhodes R.G."/>
            <person name="Goltsman E."/>
            <person name="Wang W."/>
            <person name="Xu J."/>
            <person name="Hunnicutt D.W."/>
            <person name="Staroscik A.M."/>
            <person name="Hoover T.R."/>
            <person name="Cheng Y.Q."/>
            <person name="Stein J.L."/>
        </authorList>
    </citation>
    <scope>NUCLEOTIDE SEQUENCE [LARGE SCALE GENOMIC DNA]</scope>
    <source>
        <strain>ATCC 17061 / DSM 2064 / JCM 8514 / BCRC 14874 / CCUG 350202 / NBRC 14942 / NCIMB 11054 / UW101</strain>
    </source>
</reference>
<evidence type="ECO:0000255" key="1">
    <source>
        <dbReference type="HAMAP-Rule" id="MF_00087"/>
    </source>
</evidence>
<protein>
    <recommendedName>
        <fullName evidence="1">Glutamyl-tRNA reductase 1</fullName>
        <shortName evidence="1">GluTR 1</shortName>
        <ecNumber evidence="1">1.2.1.70</ecNumber>
    </recommendedName>
</protein>
<accession>A5FLE3</accession>
<organism>
    <name type="scientific">Flavobacterium johnsoniae (strain ATCC 17061 / DSM 2064 / JCM 8514 / BCRC 14874 / CCUG 350202 / NBRC 14942 / NCIMB 11054 / UW101)</name>
    <name type="common">Cytophaga johnsonae</name>
    <dbReference type="NCBI Taxonomy" id="376686"/>
    <lineage>
        <taxon>Bacteria</taxon>
        <taxon>Pseudomonadati</taxon>
        <taxon>Bacteroidota</taxon>
        <taxon>Flavobacteriia</taxon>
        <taxon>Flavobacteriales</taxon>
        <taxon>Flavobacteriaceae</taxon>
        <taxon>Flavobacterium</taxon>
    </lineage>
</organism>
<sequence>MENNNVPKHLYFYSVGLSYKKADAEVRGQFSLDAVAKTRLLEQAKNDGIESLLVTSTCNRTEIYGFAEHPFQLIKLICDNSNGSVDAFQKVGFVYKNQEAINHMFRVGTGLDSQILGDFEIISQIKTSFTHSKSMGLANAFMERLVNAVIQASKRIKTETEISSGATSVSFASVQYILKNVEDISNKNILLFGTGKIGRNTCENLVKHTKNEHITLINRTKDKAEKLAGKLNLIVKDYSELHLELQKADVVVVATGAQNPTVDKAILNLKKPLLILDLSIPKNVNENVEELEGVTLIHMDYLSQLTDETLENRKLHIPAAEAIIEEIKEEFVTWMKGRKFAPTINALKEKLNAIKASELDFQSKKIADFNEEQAEIISNRIIQKITTHFANHLKDDDTMVDESIEWIEKVFKIKAS</sequence>
<feature type="chain" id="PRO_0000335032" description="Glutamyl-tRNA reductase 1">
    <location>
        <begin position="1"/>
        <end position="416"/>
    </location>
</feature>
<feature type="active site" description="Nucleophile" evidence="1">
    <location>
        <position position="58"/>
    </location>
</feature>
<feature type="binding site" evidence="1">
    <location>
        <begin position="57"/>
        <end position="60"/>
    </location>
    <ligand>
        <name>substrate</name>
    </ligand>
</feature>
<feature type="binding site" evidence="1">
    <location>
        <position position="113"/>
    </location>
    <ligand>
        <name>substrate</name>
    </ligand>
</feature>
<feature type="binding site" evidence="1">
    <location>
        <begin position="118"/>
        <end position="120"/>
    </location>
    <ligand>
        <name>substrate</name>
    </ligand>
</feature>
<feature type="binding site" evidence="1">
    <location>
        <position position="124"/>
    </location>
    <ligand>
        <name>substrate</name>
    </ligand>
</feature>
<feature type="binding site" evidence="1">
    <location>
        <begin position="193"/>
        <end position="198"/>
    </location>
    <ligand>
        <name>NADP(+)</name>
        <dbReference type="ChEBI" id="CHEBI:58349"/>
    </ligand>
</feature>
<feature type="site" description="Important for activity" evidence="1">
    <location>
        <position position="103"/>
    </location>
</feature>
<gene>
    <name evidence="1" type="primary">hemA1</name>
    <name type="ordered locus">Fjoh_0942</name>
</gene>
<comment type="function">
    <text evidence="1">Catalyzes the NADPH-dependent reduction of glutamyl-tRNA(Glu) to glutamate 1-semialdehyde (GSA).</text>
</comment>
<comment type="catalytic activity">
    <reaction evidence="1">
        <text>(S)-4-amino-5-oxopentanoate + tRNA(Glu) + NADP(+) = L-glutamyl-tRNA(Glu) + NADPH + H(+)</text>
        <dbReference type="Rhea" id="RHEA:12344"/>
        <dbReference type="Rhea" id="RHEA-COMP:9663"/>
        <dbReference type="Rhea" id="RHEA-COMP:9680"/>
        <dbReference type="ChEBI" id="CHEBI:15378"/>
        <dbReference type="ChEBI" id="CHEBI:57501"/>
        <dbReference type="ChEBI" id="CHEBI:57783"/>
        <dbReference type="ChEBI" id="CHEBI:58349"/>
        <dbReference type="ChEBI" id="CHEBI:78442"/>
        <dbReference type="ChEBI" id="CHEBI:78520"/>
        <dbReference type="EC" id="1.2.1.70"/>
    </reaction>
</comment>
<comment type="pathway">
    <text evidence="1">Porphyrin-containing compound metabolism; protoporphyrin-IX biosynthesis; 5-aminolevulinate from L-glutamyl-tRNA(Glu): step 1/2.</text>
</comment>
<comment type="subunit">
    <text evidence="1">Homodimer.</text>
</comment>
<comment type="domain">
    <text evidence="1">Possesses an unusual extended V-shaped dimeric structure with each monomer consisting of three distinct domains arranged along a curved 'spinal' alpha-helix. The N-terminal catalytic domain specifically recognizes the glutamate moiety of the substrate. The second domain is the NADPH-binding domain, and the third C-terminal domain is responsible for dimerization.</text>
</comment>
<comment type="miscellaneous">
    <text evidence="1">During catalysis, the active site Cys acts as a nucleophile attacking the alpha-carbonyl group of tRNA-bound glutamate with the formation of a thioester intermediate between enzyme and glutamate, and the concomitant release of tRNA(Glu). The thioester intermediate is finally reduced by direct hydride transfer from NADPH, to form the product GSA.</text>
</comment>
<comment type="similarity">
    <text evidence="1">Belongs to the glutamyl-tRNA reductase family.</text>
</comment>